<evidence type="ECO:0000269" key="1">
    <source>
    </source>
</evidence>
<evidence type="ECO:0000305" key="2"/>
<comment type="function">
    <text evidence="1">Plays an essential role in viral DNA replication.</text>
</comment>
<comment type="subcellular location">
    <subcellularLocation>
        <location evidence="1">Host nucleus</location>
    </subcellularLocation>
</comment>
<comment type="similarity">
    <text evidence="2">Belongs to the baculoviridae LEF-10 family.</text>
</comment>
<gene>
    <name type="primary">LEF-10</name>
</gene>
<proteinExistence type="inferred from homology"/>
<name>LEF10_NPVAC</name>
<reference key="1">
    <citation type="journal article" date="1994" name="Virology">
        <title>The complete DNA sequence of Autographa californica nuclear polyhedrosis virus.</title>
        <authorList>
            <person name="Ayres M.D."/>
            <person name="Howard S.C."/>
            <person name="Kuzio J."/>
            <person name="Lopez-Ferber M."/>
            <person name="Possee R.D."/>
        </authorList>
    </citation>
    <scope>NUCLEOTIDE SEQUENCE [LARGE SCALE GENOMIC DNA]</scope>
    <source>
        <strain>C6</strain>
    </source>
</reference>
<reference key="2">
    <citation type="journal article" date="2016" name="PLoS ONE">
        <title>Aggregation of AcMNPV LEF-10 and its impact on viral late gene expression.</title>
        <authorList>
            <person name="Xu X."/>
            <person name="Zhou X."/>
            <person name="Nan H."/>
            <person name="Zhao Y."/>
            <person name="Bai Y."/>
            <person name="Ou Y."/>
            <person name="Chen H."/>
        </authorList>
    </citation>
    <scope>FUNCTION</scope>
    <scope>SUBCELLULAR LOCATION</scope>
</reference>
<accession>Q9YKK9</accession>
<organismHost>
    <name type="scientific">Lepidoptera</name>
    <name type="common">butterflies and moths</name>
    <dbReference type="NCBI Taxonomy" id="7088"/>
</organismHost>
<organism>
    <name type="scientific">Autographa californica nuclear polyhedrosis virus</name>
    <name type="common">AcMNPV</name>
    <dbReference type="NCBI Taxonomy" id="46015"/>
    <lineage>
        <taxon>Viruses</taxon>
        <taxon>Viruses incertae sedis</taxon>
        <taxon>Naldaviricetes</taxon>
        <taxon>Lefavirales</taxon>
        <taxon>Baculoviridae</taxon>
        <taxon>Alphabaculovirus</taxon>
        <taxon>Alphabaculovirus aucalifornicae</taxon>
    </lineage>
</organism>
<feature type="chain" id="PRO_0000338991" description="Late expression factor 10">
    <location>
        <begin position="1"/>
        <end position="78"/>
    </location>
</feature>
<dbReference type="EMBL" id="L22858">
    <property type="protein sequence ID" value="AAD18157.1"/>
    <property type="molecule type" value="Genomic_DNA"/>
</dbReference>
<dbReference type="PIR" id="F72856">
    <property type="entry name" value="F72856"/>
</dbReference>
<dbReference type="KEGG" id="vg:1403886"/>
<dbReference type="OrthoDB" id="26385at10239"/>
<dbReference type="Proteomes" id="UP000008292">
    <property type="component" value="Segment"/>
</dbReference>
<dbReference type="GO" id="GO:0042025">
    <property type="term" value="C:host cell nucleus"/>
    <property type="evidence" value="ECO:0000314"/>
    <property type="project" value="UniProtKB"/>
</dbReference>
<dbReference type="GO" id="GO:0006260">
    <property type="term" value="P:DNA replication"/>
    <property type="evidence" value="ECO:0007669"/>
    <property type="project" value="UniProtKB-KW"/>
</dbReference>
<dbReference type="GO" id="GO:0039693">
    <property type="term" value="P:viral DNA genome replication"/>
    <property type="evidence" value="ECO:0000314"/>
    <property type="project" value="UniProtKB"/>
</dbReference>
<dbReference type="InterPro" id="IPR009855">
    <property type="entry name" value="Baculo_LEF-10"/>
</dbReference>
<dbReference type="Pfam" id="PF07206">
    <property type="entry name" value="Baculo_LEF-10"/>
    <property type="match status" value="1"/>
</dbReference>
<sequence>MTNVWFATDVNLINCVLKDNLFLIDNNYIILNVFDQETDQVRPLCLGEINALQTDAAAQADAMLDTSSTSELQSNAST</sequence>
<protein>
    <recommendedName>
        <fullName>Late expression factor 10</fullName>
    </recommendedName>
</protein>
<keyword id="KW-0235">DNA replication</keyword>
<keyword id="KW-1048">Host nucleus</keyword>
<keyword id="KW-1185">Reference proteome</keyword>
<keyword id="KW-0804">Transcription</keyword>
<keyword id="KW-0805">Transcription regulation</keyword>
<keyword id="KW-1194">Viral DNA replication</keyword>